<protein>
    <recommendedName>
        <fullName>Uncharacterized protein RC0115</fullName>
    </recommendedName>
</protein>
<accession>Q92JF2</accession>
<reference key="1">
    <citation type="journal article" date="2001" name="Science">
        <title>Mechanisms of evolution in Rickettsia conorii and R. prowazekii.</title>
        <authorList>
            <person name="Ogata H."/>
            <person name="Audic S."/>
            <person name="Renesto-Audiffren P."/>
            <person name="Fournier P.-E."/>
            <person name="Barbe V."/>
            <person name="Samson D."/>
            <person name="Roux V."/>
            <person name="Cossart P."/>
            <person name="Weissenbach J."/>
            <person name="Claverie J.-M."/>
            <person name="Raoult D."/>
        </authorList>
    </citation>
    <scope>NUCLEOTIDE SEQUENCE [LARGE SCALE GENOMIC DNA]</scope>
    <source>
        <strain>ATCC VR-613 / Malish 7</strain>
    </source>
</reference>
<gene>
    <name type="ordered locus">RC0115</name>
</gene>
<proteinExistence type="predicted"/>
<name>Y115_RICCN</name>
<organism>
    <name type="scientific">Rickettsia conorii (strain ATCC VR-613 / Malish 7)</name>
    <dbReference type="NCBI Taxonomy" id="272944"/>
    <lineage>
        <taxon>Bacteria</taxon>
        <taxon>Pseudomonadati</taxon>
        <taxon>Pseudomonadota</taxon>
        <taxon>Alphaproteobacteria</taxon>
        <taxon>Rickettsiales</taxon>
        <taxon>Rickettsiaceae</taxon>
        <taxon>Rickettsieae</taxon>
        <taxon>Rickettsia</taxon>
        <taxon>spotted fever group</taxon>
    </lineage>
</organism>
<dbReference type="EMBL" id="AE006914">
    <property type="protein sequence ID" value="AAL02653.1"/>
    <property type="molecule type" value="Genomic_DNA"/>
</dbReference>
<dbReference type="PIR" id="C97714">
    <property type="entry name" value="C97714"/>
</dbReference>
<dbReference type="SMR" id="Q92JF2"/>
<dbReference type="KEGG" id="rco:RC0115"/>
<dbReference type="HOGENOM" id="CLU_2901355_0_0_5"/>
<dbReference type="Proteomes" id="UP000000816">
    <property type="component" value="Chromosome"/>
</dbReference>
<feature type="chain" id="PRO_0000101452" description="Uncharacterized protein RC0115">
    <location>
        <begin position="1"/>
        <end position="62"/>
    </location>
</feature>
<feature type="region of interest" description="Disordered" evidence="1">
    <location>
        <begin position="1"/>
        <end position="24"/>
    </location>
</feature>
<feature type="compositionally biased region" description="Polar residues" evidence="1">
    <location>
        <begin position="1"/>
        <end position="18"/>
    </location>
</feature>
<evidence type="ECO:0000256" key="1">
    <source>
        <dbReference type="SAM" id="MobiDB-lite"/>
    </source>
</evidence>
<sequence length="62" mass="6654">MTTNRVDPLEQTSPNTPTSKREKAKIYGKKLVDSAKIGAKTLSNAYKVTIGTIEVVGPGSDF</sequence>